<gene>
    <name evidence="1" type="primary">tolB</name>
    <name type="ordered locus">RrIowa_0487</name>
</gene>
<sequence length="444" mass="49151">MRNIIYFILSLLFSVTSYALETINIEHGRADPTPIAVNKFYADNSAADVLGHDMVKVISNDLKLSGLFRPISAASFIEEKTGIEYKPLFAAWRQINASLLVNGEVKKLESGKFQISFILWDTLLEKQLVGEILEVPKNLWRRAAHKIADKIYEKITGDAGYFDTKIVYVSESSSLPKIKRIALMDYDGANNKYLTNGKSLVLTPRFARSADKIFYVSYATKRRVLVYEKDLKTGKESVVGDFPGISFAPRFSPDGRKAVMSIAKNGSTHIYEIDLATKRLHKLTDGFGINTSPSYSPDGTKIVYNSDRNGVPQLYIMNSDGSDVQRISFGGGSYAAPSWSPRGDYIAFTKITKGDGGKTFNIGIMKACPQDNKNSERIITSGYLVESPCWSPNGRVIMFAKGWPSSAKAPGKNKIFAIDLTGHNEREIMTPADASDPEWSGVLN</sequence>
<organism>
    <name type="scientific">Rickettsia rickettsii (strain Iowa)</name>
    <dbReference type="NCBI Taxonomy" id="452659"/>
    <lineage>
        <taxon>Bacteria</taxon>
        <taxon>Pseudomonadati</taxon>
        <taxon>Pseudomonadota</taxon>
        <taxon>Alphaproteobacteria</taxon>
        <taxon>Rickettsiales</taxon>
        <taxon>Rickettsiaceae</taxon>
        <taxon>Rickettsieae</taxon>
        <taxon>Rickettsia</taxon>
        <taxon>spotted fever group</taxon>
    </lineage>
</organism>
<dbReference type="EMBL" id="CP000766">
    <property type="protein sequence ID" value="ABY72369.1"/>
    <property type="molecule type" value="Genomic_DNA"/>
</dbReference>
<dbReference type="RefSeq" id="WP_012262306.1">
    <property type="nucleotide sequence ID" value="NC_010263.3"/>
</dbReference>
<dbReference type="SMR" id="B0BWZ3"/>
<dbReference type="KEGG" id="rrj:RrIowa_0487"/>
<dbReference type="eggNOG" id="COG0823">
    <property type="taxonomic scope" value="Bacteria"/>
</dbReference>
<dbReference type="HOGENOM" id="CLU_047123_0_0_5"/>
<dbReference type="Proteomes" id="UP000000796">
    <property type="component" value="Chromosome"/>
</dbReference>
<dbReference type="GO" id="GO:0042597">
    <property type="term" value="C:periplasmic space"/>
    <property type="evidence" value="ECO:0007669"/>
    <property type="project" value="UniProtKB-SubCell"/>
</dbReference>
<dbReference type="GO" id="GO:0051301">
    <property type="term" value="P:cell division"/>
    <property type="evidence" value="ECO:0007669"/>
    <property type="project" value="UniProtKB-UniRule"/>
</dbReference>
<dbReference type="GO" id="GO:0017038">
    <property type="term" value="P:protein import"/>
    <property type="evidence" value="ECO:0007669"/>
    <property type="project" value="InterPro"/>
</dbReference>
<dbReference type="Gene3D" id="2.120.10.30">
    <property type="entry name" value="TolB, C-terminal domain"/>
    <property type="match status" value="1"/>
</dbReference>
<dbReference type="Gene3D" id="3.40.50.10070">
    <property type="entry name" value="TolB, N-terminal domain"/>
    <property type="match status" value="1"/>
</dbReference>
<dbReference type="HAMAP" id="MF_00671">
    <property type="entry name" value="TolB"/>
    <property type="match status" value="1"/>
</dbReference>
<dbReference type="InterPro" id="IPR011042">
    <property type="entry name" value="6-blade_b-propeller_TolB-like"/>
</dbReference>
<dbReference type="InterPro" id="IPR011659">
    <property type="entry name" value="PD40"/>
</dbReference>
<dbReference type="InterPro" id="IPR014167">
    <property type="entry name" value="Tol-Pal_TolB"/>
</dbReference>
<dbReference type="InterPro" id="IPR007195">
    <property type="entry name" value="TolB_N"/>
</dbReference>
<dbReference type="NCBIfam" id="TIGR02800">
    <property type="entry name" value="propeller_TolB"/>
    <property type="match status" value="1"/>
</dbReference>
<dbReference type="PANTHER" id="PTHR36842:SF1">
    <property type="entry name" value="PROTEIN TOLB"/>
    <property type="match status" value="1"/>
</dbReference>
<dbReference type="PANTHER" id="PTHR36842">
    <property type="entry name" value="PROTEIN TOLB HOMOLOG"/>
    <property type="match status" value="1"/>
</dbReference>
<dbReference type="Pfam" id="PF07676">
    <property type="entry name" value="PD40"/>
    <property type="match status" value="4"/>
</dbReference>
<dbReference type="Pfam" id="PF04052">
    <property type="entry name" value="TolB_N"/>
    <property type="match status" value="1"/>
</dbReference>
<dbReference type="SUPFAM" id="SSF52964">
    <property type="entry name" value="TolB, N-terminal domain"/>
    <property type="match status" value="1"/>
</dbReference>
<dbReference type="SUPFAM" id="SSF69304">
    <property type="entry name" value="Tricorn protease N-terminal domain"/>
    <property type="match status" value="1"/>
</dbReference>
<reference key="1">
    <citation type="journal article" date="2008" name="Infect. Immun.">
        <title>Genomic comparison of virulent Rickettsia rickettsii Sheila Smith and avirulent Rickettsia rickettsii Iowa.</title>
        <authorList>
            <person name="Ellison D.W."/>
            <person name="Clark T.R."/>
            <person name="Sturdevant D.E."/>
            <person name="Virtaneva K."/>
            <person name="Porcella S.F."/>
            <person name="Hackstadt T."/>
        </authorList>
    </citation>
    <scope>NUCLEOTIDE SEQUENCE [LARGE SCALE GENOMIC DNA]</scope>
    <source>
        <strain>Iowa</strain>
    </source>
</reference>
<proteinExistence type="inferred from homology"/>
<feature type="signal peptide" evidence="1">
    <location>
        <begin position="1"/>
        <end position="19"/>
    </location>
</feature>
<feature type="chain" id="PRO_1000082942" description="Tol-Pal system protein TolB" evidence="1">
    <location>
        <begin position="20"/>
        <end position="444"/>
    </location>
</feature>
<evidence type="ECO:0000255" key="1">
    <source>
        <dbReference type="HAMAP-Rule" id="MF_00671"/>
    </source>
</evidence>
<name>TOLB_RICRO</name>
<keyword id="KW-0131">Cell cycle</keyword>
<keyword id="KW-0132">Cell division</keyword>
<keyword id="KW-0574">Periplasm</keyword>
<keyword id="KW-0732">Signal</keyword>
<comment type="function">
    <text evidence="1">Part of the Tol-Pal system, which plays a role in outer membrane invagination during cell division and is important for maintaining outer membrane integrity.</text>
</comment>
<comment type="subunit">
    <text evidence="1">The Tol-Pal system is composed of five core proteins: the inner membrane proteins TolA, TolQ and TolR, the periplasmic protein TolB and the outer membrane protein Pal. They form a network linking the inner and outer membranes and the peptidoglycan layer.</text>
</comment>
<comment type="subcellular location">
    <subcellularLocation>
        <location evidence="1">Periplasm</location>
    </subcellularLocation>
</comment>
<comment type="similarity">
    <text evidence="1">Belongs to the TolB family.</text>
</comment>
<protein>
    <recommendedName>
        <fullName evidence="1">Tol-Pal system protein TolB</fullName>
    </recommendedName>
</protein>
<accession>B0BWZ3</accession>